<name>MRAY_BORPE</name>
<protein>
    <recommendedName>
        <fullName evidence="1">Phospho-N-acetylmuramoyl-pentapeptide-transferase</fullName>
        <ecNumber evidence="1">2.7.8.13</ecNumber>
    </recommendedName>
    <alternativeName>
        <fullName evidence="1">UDP-MurNAc-pentapeptide phosphotransferase</fullName>
    </alternativeName>
</protein>
<dbReference type="EC" id="2.7.8.13" evidence="1"/>
<dbReference type="EMBL" id="BX640420">
    <property type="protein sequence ID" value="CAE43297.1"/>
    <property type="molecule type" value="Genomic_DNA"/>
</dbReference>
<dbReference type="RefSeq" id="NP_881601.1">
    <property type="nucleotide sequence ID" value="NC_002929.2"/>
</dbReference>
<dbReference type="SMR" id="Q7VUQ0"/>
<dbReference type="STRING" id="257313.BP3026"/>
<dbReference type="PaxDb" id="257313-BP3026"/>
<dbReference type="KEGG" id="bpe:BP3026"/>
<dbReference type="PATRIC" id="fig|257313.5.peg.3272"/>
<dbReference type="eggNOG" id="COG0472">
    <property type="taxonomic scope" value="Bacteria"/>
</dbReference>
<dbReference type="HOGENOM" id="CLU_023982_0_0_4"/>
<dbReference type="UniPathway" id="UPA00219"/>
<dbReference type="Proteomes" id="UP000002676">
    <property type="component" value="Chromosome"/>
</dbReference>
<dbReference type="GO" id="GO:0005886">
    <property type="term" value="C:plasma membrane"/>
    <property type="evidence" value="ECO:0007669"/>
    <property type="project" value="UniProtKB-SubCell"/>
</dbReference>
<dbReference type="GO" id="GO:0046872">
    <property type="term" value="F:metal ion binding"/>
    <property type="evidence" value="ECO:0007669"/>
    <property type="project" value="UniProtKB-KW"/>
</dbReference>
<dbReference type="GO" id="GO:0008963">
    <property type="term" value="F:phospho-N-acetylmuramoyl-pentapeptide-transferase activity"/>
    <property type="evidence" value="ECO:0007669"/>
    <property type="project" value="UniProtKB-UniRule"/>
</dbReference>
<dbReference type="GO" id="GO:0051992">
    <property type="term" value="F:UDP-N-acetylmuramoyl-L-alanyl-D-glutamyl-meso-2,6-diaminopimelyl-D-alanyl-D-alanine:undecaprenyl-phosphate transferase activity"/>
    <property type="evidence" value="ECO:0007669"/>
    <property type="project" value="RHEA"/>
</dbReference>
<dbReference type="GO" id="GO:0051301">
    <property type="term" value="P:cell division"/>
    <property type="evidence" value="ECO:0007669"/>
    <property type="project" value="UniProtKB-KW"/>
</dbReference>
<dbReference type="GO" id="GO:0071555">
    <property type="term" value="P:cell wall organization"/>
    <property type="evidence" value="ECO:0007669"/>
    <property type="project" value="UniProtKB-KW"/>
</dbReference>
<dbReference type="GO" id="GO:0009252">
    <property type="term" value="P:peptidoglycan biosynthetic process"/>
    <property type="evidence" value="ECO:0007669"/>
    <property type="project" value="UniProtKB-UniRule"/>
</dbReference>
<dbReference type="GO" id="GO:0008360">
    <property type="term" value="P:regulation of cell shape"/>
    <property type="evidence" value="ECO:0007669"/>
    <property type="project" value="UniProtKB-KW"/>
</dbReference>
<dbReference type="CDD" id="cd06852">
    <property type="entry name" value="GT_MraY"/>
    <property type="match status" value="1"/>
</dbReference>
<dbReference type="HAMAP" id="MF_00038">
    <property type="entry name" value="MraY"/>
    <property type="match status" value="1"/>
</dbReference>
<dbReference type="InterPro" id="IPR000715">
    <property type="entry name" value="Glycosyl_transferase_4"/>
</dbReference>
<dbReference type="InterPro" id="IPR003524">
    <property type="entry name" value="PNAcMuramoyl-5peptid_Trfase"/>
</dbReference>
<dbReference type="InterPro" id="IPR018480">
    <property type="entry name" value="PNAcMuramoyl-5peptid_Trfase_CS"/>
</dbReference>
<dbReference type="NCBIfam" id="TIGR00445">
    <property type="entry name" value="mraY"/>
    <property type="match status" value="1"/>
</dbReference>
<dbReference type="PANTHER" id="PTHR22926">
    <property type="entry name" value="PHOSPHO-N-ACETYLMURAMOYL-PENTAPEPTIDE-TRANSFERASE"/>
    <property type="match status" value="1"/>
</dbReference>
<dbReference type="PANTHER" id="PTHR22926:SF5">
    <property type="entry name" value="PHOSPHO-N-ACETYLMURAMOYL-PENTAPEPTIDE-TRANSFERASE HOMOLOG"/>
    <property type="match status" value="1"/>
</dbReference>
<dbReference type="Pfam" id="PF00953">
    <property type="entry name" value="Glycos_transf_4"/>
    <property type="match status" value="1"/>
</dbReference>
<dbReference type="PROSITE" id="PS01347">
    <property type="entry name" value="MRAY_1"/>
    <property type="match status" value="1"/>
</dbReference>
<dbReference type="PROSITE" id="PS01348">
    <property type="entry name" value="MRAY_2"/>
    <property type="match status" value="1"/>
</dbReference>
<organism>
    <name type="scientific">Bordetella pertussis (strain Tohama I / ATCC BAA-589 / NCTC 13251)</name>
    <dbReference type="NCBI Taxonomy" id="257313"/>
    <lineage>
        <taxon>Bacteria</taxon>
        <taxon>Pseudomonadati</taxon>
        <taxon>Pseudomonadota</taxon>
        <taxon>Betaproteobacteria</taxon>
        <taxon>Burkholderiales</taxon>
        <taxon>Alcaligenaceae</taxon>
        <taxon>Bordetella</taxon>
    </lineage>
</organism>
<sequence length="377" mass="41315">MRAIGVFEYITLRAVLACATALLIGLVAGPRVIRRLTEMKIGQAVRAYGPESHLVKTGTPTMGGALILIAIAISTLLWADWTNRFVWVVLLVTFGFGWIGWMDDYRKVVYRDPEGMPARQKFFWQATIGLVAAVYLAFAVSAPANTELWPLFKAWVGSGFTMPLPTRADLIVPFFKSVSYPLGVLGFVALTWAVIVGTSNAVNLTDGLDGLAIMPTVMVGSALGIFAYVVGRVDYSKYLLFPYIPGAAELMVLCAAIGGAGLAFLWFNAYPAQVFMGDVGALALGGALGTIAVIVRQEIVLFIMGGVFVVETLSVMVQVTWFKYTKRKYGQGRRIFRMAPLHHHFEVGGWKETQVVVRFWIITMMLVLVGLSTLKLR</sequence>
<comment type="function">
    <text evidence="1">Catalyzes the initial step of the lipid cycle reactions in the biosynthesis of the cell wall peptidoglycan: transfers peptidoglycan precursor phospho-MurNAc-pentapeptide from UDP-MurNAc-pentapeptide onto the lipid carrier undecaprenyl phosphate, yielding undecaprenyl-pyrophosphoryl-MurNAc-pentapeptide, known as lipid I.</text>
</comment>
<comment type="catalytic activity">
    <reaction evidence="1">
        <text>UDP-N-acetyl-alpha-D-muramoyl-L-alanyl-gamma-D-glutamyl-meso-2,6-diaminopimeloyl-D-alanyl-D-alanine + di-trans,octa-cis-undecaprenyl phosphate = di-trans,octa-cis-undecaprenyl diphospho-N-acetyl-alpha-D-muramoyl-L-alanyl-D-glutamyl-meso-2,6-diaminopimeloyl-D-alanyl-D-alanine + UMP</text>
        <dbReference type="Rhea" id="RHEA:28386"/>
        <dbReference type="ChEBI" id="CHEBI:57865"/>
        <dbReference type="ChEBI" id="CHEBI:60392"/>
        <dbReference type="ChEBI" id="CHEBI:61386"/>
        <dbReference type="ChEBI" id="CHEBI:61387"/>
        <dbReference type="EC" id="2.7.8.13"/>
    </reaction>
</comment>
<comment type="cofactor">
    <cofactor evidence="1">
        <name>Mg(2+)</name>
        <dbReference type="ChEBI" id="CHEBI:18420"/>
    </cofactor>
</comment>
<comment type="pathway">
    <text evidence="1">Cell wall biogenesis; peptidoglycan biosynthesis.</text>
</comment>
<comment type="subcellular location">
    <subcellularLocation>
        <location evidence="1">Cell inner membrane</location>
        <topology evidence="1">Multi-pass membrane protein</topology>
    </subcellularLocation>
</comment>
<comment type="similarity">
    <text evidence="1">Belongs to the glycosyltransferase 4 family. MraY subfamily.</text>
</comment>
<accession>Q7VUQ0</accession>
<keyword id="KW-0131">Cell cycle</keyword>
<keyword id="KW-0132">Cell division</keyword>
<keyword id="KW-0997">Cell inner membrane</keyword>
<keyword id="KW-1003">Cell membrane</keyword>
<keyword id="KW-0133">Cell shape</keyword>
<keyword id="KW-0961">Cell wall biogenesis/degradation</keyword>
<keyword id="KW-0460">Magnesium</keyword>
<keyword id="KW-0472">Membrane</keyword>
<keyword id="KW-0479">Metal-binding</keyword>
<keyword id="KW-0573">Peptidoglycan synthesis</keyword>
<keyword id="KW-1185">Reference proteome</keyword>
<keyword id="KW-0808">Transferase</keyword>
<keyword id="KW-0812">Transmembrane</keyword>
<keyword id="KW-1133">Transmembrane helix</keyword>
<evidence type="ECO:0000255" key="1">
    <source>
        <dbReference type="HAMAP-Rule" id="MF_00038"/>
    </source>
</evidence>
<reference key="1">
    <citation type="journal article" date="2003" name="Nat. Genet.">
        <title>Comparative analysis of the genome sequences of Bordetella pertussis, Bordetella parapertussis and Bordetella bronchiseptica.</title>
        <authorList>
            <person name="Parkhill J."/>
            <person name="Sebaihia M."/>
            <person name="Preston A."/>
            <person name="Murphy L.D."/>
            <person name="Thomson N.R."/>
            <person name="Harris D.E."/>
            <person name="Holden M.T.G."/>
            <person name="Churcher C.M."/>
            <person name="Bentley S.D."/>
            <person name="Mungall K.L."/>
            <person name="Cerdeno-Tarraga A.-M."/>
            <person name="Temple L."/>
            <person name="James K.D."/>
            <person name="Harris B."/>
            <person name="Quail M.A."/>
            <person name="Achtman M."/>
            <person name="Atkin R."/>
            <person name="Baker S."/>
            <person name="Basham D."/>
            <person name="Bason N."/>
            <person name="Cherevach I."/>
            <person name="Chillingworth T."/>
            <person name="Collins M."/>
            <person name="Cronin A."/>
            <person name="Davis P."/>
            <person name="Doggett J."/>
            <person name="Feltwell T."/>
            <person name="Goble A."/>
            <person name="Hamlin N."/>
            <person name="Hauser H."/>
            <person name="Holroyd S."/>
            <person name="Jagels K."/>
            <person name="Leather S."/>
            <person name="Moule S."/>
            <person name="Norberczak H."/>
            <person name="O'Neil S."/>
            <person name="Ormond D."/>
            <person name="Price C."/>
            <person name="Rabbinowitsch E."/>
            <person name="Rutter S."/>
            <person name="Sanders M."/>
            <person name="Saunders D."/>
            <person name="Seeger K."/>
            <person name="Sharp S."/>
            <person name="Simmonds M."/>
            <person name="Skelton J."/>
            <person name="Squares R."/>
            <person name="Squares S."/>
            <person name="Stevens K."/>
            <person name="Unwin L."/>
            <person name="Whitehead S."/>
            <person name="Barrell B.G."/>
            <person name="Maskell D.J."/>
        </authorList>
    </citation>
    <scope>NUCLEOTIDE SEQUENCE [LARGE SCALE GENOMIC DNA]</scope>
    <source>
        <strain>Tohama I / ATCC BAA-589 / NCTC 13251</strain>
    </source>
</reference>
<proteinExistence type="inferred from homology"/>
<gene>
    <name evidence="1" type="primary">mraY</name>
    <name type="ordered locus">BP3026</name>
</gene>
<feature type="chain" id="PRO_0000108793" description="Phospho-N-acetylmuramoyl-pentapeptide-transferase">
    <location>
        <begin position="1"/>
        <end position="377"/>
    </location>
</feature>
<feature type="transmembrane region" description="Helical" evidence="1">
    <location>
        <begin position="9"/>
        <end position="29"/>
    </location>
</feature>
<feature type="transmembrane region" description="Helical" evidence="1">
    <location>
        <begin position="59"/>
        <end position="79"/>
    </location>
</feature>
<feature type="transmembrane region" description="Helical" evidence="1">
    <location>
        <begin position="85"/>
        <end position="105"/>
    </location>
</feature>
<feature type="transmembrane region" description="Helical" evidence="1">
    <location>
        <begin position="122"/>
        <end position="142"/>
    </location>
</feature>
<feature type="transmembrane region" description="Helical" evidence="1">
    <location>
        <begin position="155"/>
        <end position="175"/>
    </location>
</feature>
<feature type="transmembrane region" description="Helical" evidence="1">
    <location>
        <begin position="178"/>
        <end position="198"/>
    </location>
</feature>
<feature type="transmembrane region" description="Helical" evidence="1">
    <location>
        <begin position="210"/>
        <end position="230"/>
    </location>
</feature>
<feature type="transmembrane region" description="Helical" evidence="1">
    <location>
        <begin position="247"/>
        <end position="267"/>
    </location>
</feature>
<feature type="transmembrane region" description="Helical" evidence="1">
    <location>
        <begin position="274"/>
        <end position="294"/>
    </location>
</feature>
<feature type="transmembrane region" description="Helical" evidence="1">
    <location>
        <begin position="299"/>
        <end position="319"/>
    </location>
</feature>
<feature type="transmembrane region" description="Helical" evidence="1">
    <location>
        <begin position="354"/>
        <end position="374"/>
    </location>
</feature>